<organism>
    <name type="scientific">Acinetobacter baumannii (strain ATCC 17978 / DSM 105126 / CIP 53.77 / LMG 1025 / NCDC KC755 / 5377)</name>
    <dbReference type="NCBI Taxonomy" id="400667"/>
    <lineage>
        <taxon>Bacteria</taxon>
        <taxon>Pseudomonadati</taxon>
        <taxon>Pseudomonadota</taxon>
        <taxon>Gammaproteobacteria</taxon>
        <taxon>Moraxellales</taxon>
        <taxon>Moraxellaceae</taxon>
        <taxon>Acinetobacter</taxon>
        <taxon>Acinetobacter calcoaceticus/baumannii complex</taxon>
    </lineage>
</organism>
<proteinExistence type="inferred from homology"/>
<comment type="function">
    <text evidence="1">Catalyzes the synthesis of the hydroxymethylpyrimidine phosphate (HMP-P) moiety of thiamine from aminoimidazole ribotide (AIR) in a radical S-adenosyl-L-methionine (SAM)-dependent reaction.</text>
</comment>
<comment type="catalytic activity">
    <reaction evidence="1">
        <text>5-amino-1-(5-phospho-beta-D-ribosyl)imidazole + S-adenosyl-L-methionine = 4-amino-2-methyl-5-(phosphooxymethyl)pyrimidine + CO + 5'-deoxyadenosine + formate + L-methionine + 3 H(+)</text>
        <dbReference type="Rhea" id="RHEA:24840"/>
        <dbReference type="ChEBI" id="CHEBI:15378"/>
        <dbReference type="ChEBI" id="CHEBI:15740"/>
        <dbReference type="ChEBI" id="CHEBI:17245"/>
        <dbReference type="ChEBI" id="CHEBI:17319"/>
        <dbReference type="ChEBI" id="CHEBI:57844"/>
        <dbReference type="ChEBI" id="CHEBI:58354"/>
        <dbReference type="ChEBI" id="CHEBI:59789"/>
        <dbReference type="ChEBI" id="CHEBI:137981"/>
        <dbReference type="EC" id="4.1.99.17"/>
    </reaction>
</comment>
<comment type="cofactor">
    <cofactor evidence="1">
        <name>[4Fe-4S] cluster</name>
        <dbReference type="ChEBI" id="CHEBI:49883"/>
    </cofactor>
    <text evidence="1">Binds 1 [4Fe-4S] cluster per subunit. The cluster is coordinated with 3 cysteines and an exchangeable S-adenosyl-L-methionine.</text>
</comment>
<comment type="pathway">
    <text evidence="1">Cofactor biosynthesis; thiamine diphosphate biosynthesis.</text>
</comment>
<comment type="subunit">
    <text evidence="1">Homodimer.</text>
</comment>
<comment type="similarity">
    <text evidence="1">Belongs to the ThiC family.</text>
</comment>
<reference key="1">
    <citation type="journal article" date="2007" name="Genes Dev.">
        <title>New insights into Acinetobacter baumannii pathogenesis revealed by high-density pyrosequencing and transposon mutagenesis.</title>
        <authorList>
            <person name="Smith M.G."/>
            <person name="Gianoulis T.A."/>
            <person name="Pukatzki S."/>
            <person name="Mekalanos J.J."/>
            <person name="Ornston L.N."/>
            <person name="Gerstein M."/>
            <person name="Snyder M."/>
        </authorList>
    </citation>
    <scope>NUCLEOTIDE SEQUENCE [LARGE SCALE GENOMIC DNA]</scope>
    <source>
        <strain>ATCC 17978 / DSM 105126 / CIP 53.77 / LMG 1025 / NCDC KC755 / 5377</strain>
    </source>
</reference>
<protein>
    <recommendedName>
        <fullName evidence="1">Phosphomethylpyrimidine synthase</fullName>
        <ecNumber evidence="1">4.1.99.17</ecNumber>
    </recommendedName>
    <alternativeName>
        <fullName evidence="1">Hydroxymethylpyrimidine phosphate synthase</fullName>
        <shortName evidence="1">HMP-P synthase</shortName>
        <shortName evidence="1">HMP-phosphate synthase</shortName>
        <shortName evidence="1">HMPP synthase</shortName>
    </alternativeName>
    <alternativeName>
        <fullName evidence="1">Thiamine biosynthesis protein ThiC</fullName>
    </alternativeName>
</protein>
<feature type="chain" id="PRO_1000093184" description="Phosphomethylpyrimidine synthase">
    <location>
        <begin position="1"/>
        <end position="625"/>
    </location>
</feature>
<feature type="binding site" evidence="1">
    <location>
        <position position="231"/>
    </location>
    <ligand>
        <name>substrate</name>
    </ligand>
</feature>
<feature type="binding site" evidence="1">
    <location>
        <position position="260"/>
    </location>
    <ligand>
        <name>substrate</name>
    </ligand>
</feature>
<feature type="binding site" evidence="1">
    <location>
        <position position="289"/>
    </location>
    <ligand>
        <name>substrate</name>
    </ligand>
</feature>
<feature type="binding site" evidence="1">
    <location>
        <position position="325"/>
    </location>
    <ligand>
        <name>substrate</name>
    </ligand>
</feature>
<feature type="binding site" evidence="1">
    <location>
        <begin position="345"/>
        <end position="347"/>
    </location>
    <ligand>
        <name>substrate</name>
    </ligand>
</feature>
<feature type="binding site" evidence="1">
    <location>
        <begin position="386"/>
        <end position="389"/>
    </location>
    <ligand>
        <name>substrate</name>
    </ligand>
</feature>
<feature type="binding site" evidence="1">
    <location>
        <position position="425"/>
    </location>
    <ligand>
        <name>substrate</name>
    </ligand>
</feature>
<feature type="binding site" evidence="1">
    <location>
        <position position="429"/>
    </location>
    <ligand>
        <name>Zn(2+)</name>
        <dbReference type="ChEBI" id="CHEBI:29105"/>
    </ligand>
</feature>
<feature type="binding site" evidence="1">
    <location>
        <position position="452"/>
    </location>
    <ligand>
        <name>substrate</name>
    </ligand>
</feature>
<feature type="binding site" evidence="1">
    <location>
        <position position="493"/>
    </location>
    <ligand>
        <name>Zn(2+)</name>
        <dbReference type="ChEBI" id="CHEBI:29105"/>
    </ligand>
</feature>
<feature type="binding site" evidence="1">
    <location>
        <position position="573"/>
    </location>
    <ligand>
        <name>[4Fe-4S] cluster</name>
        <dbReference type="ChEBI" id="CHEBI:49883"/>
        <note>4Fe-4S-S-AdoMet</note>
    </ligand>
</feature>
<feature type="binding site" evidence="1">
    <location>
        <position position="576"/>
    </location>
    <ligand>
        <name>[4Fe-4S] cluster</name>
        <dbReference type="ChEBI" id="CHEBI:49883"/>
        <note>4Fe-4S-S-AdoMet</note>
    </ligand>
</feature>
<feature type="binding site" evidence="1">
    <location>
        <position position="581"/>
    </location>
    <ligand>
        <name>[4Fe-4S] cluster</name>
        <dbReference type="ChEBI" id="CHEBI:49883"/>
        <note>4Fe-4S-S-AdoMet</note>
    </ligand>
</feature>
<sequence>MNQLTNLSSAEISAQHEQDAKDLTRILPASKKVYIEGSRPDIQVPMREISLTDTPTGLGGEHNPPIMVYDTSGVYTDPNVQIDLNKGLPSVRQKWIEERNDTDVLSGLTSKFGQERLKDIRTADIRFAHIQNPRRAKAGKNVTQMHYAKQGIITPEMEYIAIRENQRQREAVDMRQHPGQNFGAKNLKEITPEFVRQEVAEGRAIIPANINHPELEPMIIGRNFLVKINANIGNSALGSSIDEEVAKMTWATRWGADTIMDLSTGKNIHETREWIIRNSPVPIGTVPIYQALEKVDGVAENLTWEIFKDTLIEQAEQGVDYFTIHAGVLLRYVPLTANRLTGIVSRGGSIMAQWCLAHHEENFLYTHFDEICEIMKAYDVSFSLGDGLRPGCIQDANDEAQFSELKTLGELTHRAWEHDVQVMIEGPGHVPMHMIKENMDLQLEVCKEAPFYTLGPLTTDIAPGYDHITSAIGAAMIGWYGTAMLCYVTPKEHLGLPNKKDVKDGIITYKIAAHAADLAKGHPGAQVRDNALSKARFEFRWDDQFNLSLDPDTARSMHDETLPKEAHKSAHFCSMCGPKFCSMKITQNVRDYANNLTNSDSEVEEGLKAMKEVYQEQGQKLYHKV</sequence>
<accession>A3M1D2</accession>
<evidence type="ECO:0000255" key="1">
    <source>
        <dbReference type="HAMAP-Rule" id="MF_00089"/>
    </source>
</evidence>
<dbReference type="EC" id="4.1.99.17" evidence="1"/>
<dbReference type="EMBL" id="CP000521">
    <property type="protein sequence ID" value="ABO10726.2"/>
    <property type="molecule type" value="Genomic_DNA"/>
</dbReference>
<dbReference type="RefSeq" id="WP_001072861.1">
    <property type="nucleotide sequence ID" value="NZ_CP053098.1"/>
</dbReference>
<dbReference type="SMR" id="A3M1D2"/>
<dbReference type="GeneID" id="92892250"/>
<dbReference type="KEGG" id="acb:A1S_0251"/>
<dbReference type="HOGENOM" id="CLU_013181_2_1_6"/>
<dbReference type="UniPathway" id="UPA00060"/>
<dbReference type="GO" id="GO:0005829">
    <property type="term" value="C:cytosol"/>
    <property type="evidence" value="ECO:0007669"/>
    <property type="project" value="TreeGrafter"/>
</dbReference>
<dbReference type="GO" id="GO:0051539">
    <property type="term" value="F:4 iron, 4 sulfur cluster binding"/>
    <property type="evidence" value="ECO:0007669"/>
    <property type="project" value="UniProtKB-KW"/>
</dbReference>
<dbReference type="GO" id="GO:0016830">
    <property type="term" value="F:carbon-carbon lyase activity"/>
    <property type="evidence" value="ECO:0007669"/>
    <property type="project" value="InterPro"/>
</dbReference>
<dbReference type="GO" id="GO:0008270">
    <property type="term" value="F:zinc ion binding"/>
    <property type="evidence" value="ECO:0007669"/>
    <property type="project" value="UniProtKB-UniRule"/>
</dbReference>
<dbReference type="GO" id="GO:0009228">
    <property type="term" value="P:thiamine biosynthetic process"/>
    <property type="evidence" value="ECO:0007669"/>
    <property type="project" value="UniProtKB-KW"/>
</dbReference>
<dbReference type="GO" id="GO:0009229">
    <property type="term" value="P:thiamine diphosphate biosynthetic process"/>
    <property type="evidence" value="ECO:0007669"/>
    <property type="project" value="UniProtKB-UniRule"/>
</dbReference>
<dbReference type="FunFam" id="3.20.20.540:FF:000001">
    <property type="entry name" value="Phosphomethylpyrimidine synthase"/>
    <property type="match status" value="1"/>
</dbReference>
<dbReference type="Gene3D" id="6.10.250.620">
    <property type="match status" value="1"/>
</dbReference>
<dbReference type="Gene3D" id="3.20.20.540">
    <property type="entry name" value="Radical SAM ThiC family, central domain"/>
    <property type="match status" value="1"/>
</dbReference>
<dbReference type="HAMAP" id="MF_00089">
    <property type="entry name" value="ThiC"/>
    <property type="match status" value="1"/>
</dbReference>
<dbReference type="InterPro" id="IPR037509">
    <property type="entry name" value="ThiC"/>
</dbReference>
<dbReference type="InterPro" id="IPR025747">
    <property type="entry name" value="ThiC-associated_dom"/>
</dbReference>
<dbReference type="InterPro" id="IPR038521">
    <property type="entry name" value="ThiC/Bza_core_dom"/>
</dbReference>
<dbReference type="InterPro" id="IPR002817">
    <property type="entry name" value="ThiC/BzaA/B"/>
</dbReference>
<dbReference type="NCBIfam" id="NF006763">
    <property type="entry name" value="PRK09284.1"/>
    <property type="match status" value="1"/>
</dbReference>
<dbReference type="NCBIfam" id="NF009895">
    <property type="entry name" value="PRK13352.1"/>
    <property type="match status" value="1"/>
</dbReference>
<dbReference type="NCBIfam" id="TIGR00190">
    <property type="entry name" value="thiC"/>
    <property type="match status" value="1"/>
</dbReference>
<dbReference type="PANTHER" id="PTHR30557:SF1">
    <property type="entry name" value="PHOSPHOMETHYLPYRIMIDINE SYNTHASE, CHLOROPLASTIC"/>
    <property type="match status" value="1"/>
</dbReference>
<dbReference type="PANTHER" id="PTHR30557">
    <property type="entry name" value="THIAMINE BIOSYNTHESIS PROTEIN THIC"/>
    <property type="match status" value="1"/>
</dbReference>
<dbReference type="Pfam" id="PF13667">
    <property type="entry name" value="ThiC-associated"/>
    <property type="match status" value="1"/>
</dbReference>
<dbReference type="Pfam" id="PF01964">
    <property type="entry name" value="ThiC_Rad_SAM"/>
    <property type="match status" value="1"/>
</dbReference>
<dbReference type="SFLD" id="SFLDF00407">
    <property type="entry name" value="phosphomethylpyrimidine_syntha"/>
    <property type="match status" value="1"/>
</dbReference>
<dbReference type="SFLD" id="SFLDG01114">
    <property type="entry name" value="phosphomethylpyrimidine_syntha"/>
    <property type="match status" value="1"/>
</dbReference>
<dbReference type="SFLD" id="SFLDS00113">
    <property type="entry name" value="Radical_SAM_Phosphomethylpyrim"/>
    <property type="match status" value="1"/>
</dbReference>
<name>THIC_ACIBT</name>
<gene>
    <name evidence="1" type="primary">thiC</name>
    <name type="ordered locus">A1S_0251</name>
</gene>
<keyword id="KW-0004">4Fe-4S</keyword>
<keyword id="KW-0408">Iron</keyword>
<keyword id="KW-0411">Iron-sulfur</keyword>
<keyword id="KW-0456">Lyase</keyword>
<keyword id="KW-0479">Metal-binding</keyword>
<keyword id="KW-0949">S-adenosyl-L-methionine</keyword>
<keyword id="KW-0784">Thiamine biosynthesis</keyword>
<keyword id="KW-0862">Zinc</keyword>